<feature type="chain" id="PRO_0000357014" description="Kynureninase">
    <location>
        <begin position="1"/>
        <end position="423"/>
    </location>
</feature>
<feature type="binding site" evidence="1">
    <location>
        <position position="105"/>
    </location>
    <ligand>
        <name>pyridoxal 5'-phosphate</name>
        <dbReference type="ChEBI" id="CHEBI:597326"/>
    </ligand>
</feature>
<feature type="binding site" evidence="1">
    <location>
        <position position="106"/>
    </location>
    <ligand>
        <name>pyridoxal 5'-phosphate</name>
        <dbReference type="ChEBI" id="CHEBI:597326"/>
    </ligand>
</feature>
<feature type="binding site" evidence="1">
    <location>
        <begin position="133"/>
        <end position="136"/>
    </location>
    <ligand>
        <name>pyridoxal 5'-phosphate</name>
        <dbReference type="ChEBI" id="CHEBI:597326"/>
    </ligand>
</feature>
<feature type="binding site" evidence="1">
    <location>
        <position position="218"/>
    </location>
    <ligand>
        <name>pyridoxal 5'-phosphate</name>
        <dbReference type="ChEBI" id="CHEBI:597326"/>
    </ligand>
</feature>
<feature type="binding site" evidence="1">
    <location>
        <position position="221"/>
    </location>
    <ligand>
        <name>pyridoxal 5'-phosphate</name>
        <dbReference type="ChEBI" id="CHEBI:597326"/>
    </ligand>
</feature>
<feature type="binding site" evidence="1">
    <location>
        <position position="243"/>
    </location>
    <ligand>
        <name>pyridoxal 5'-phosphate</name>
        <dbReference type="ChEBI" id="CHEBI:597326"/>
    </ligand>
</feature>
<feature type="binding site" evidence="1">
    <location>
        <position position="273"/>
    </location>
    <ligand>
        <name>pyridoxal 5'-phosphate</name>
        <dbReference type="ChEBI" id="CHEBI:597326"/>
    </ligand>
</feature>
<feature type="binding site" evidence="1">
    <location>
        <position position="301"/>
    </location>
    <ligand>
        <name>pyridoxal 5'-phosphate</name>
        <dbReference type="ChEBI" id="CHEBI:597326"/>
    </ligand>
</feature>
<feature type="modified residue" description="N6-(pyridoxal phosphate)lysine" evidence="1">
    <location>
        <position position="244"/>
    </location>
</feature>
<dbReference type="EC" id="3.7.1.3" evidence="1"/>
<dbReference type="EMBL" id="AE008923">
    <property type="protein sequence ID" value="AAM36469.1"/>
    <property type="molecule type" value="Genomic_DNA"/>
</dbReference>
<dbReference type="RefSeq" id="WP_011051023.1">
    <property type="nucleotide sequence ID" value="NC_003919.1"/>
</dbReference>
<dbReference type="SMR" id="Q8PM33"/>
<dbReference type="GeneID" id="66910759"/>
<dbReference type="KEGG" id="xac:XAC1601"/>
<dbReference type="eggNOG" id="COG3844">
    <property type="taxonomic scope" value="Bacteria"/>
</dbReference>
<dbReference type="HOGENOM" id="CLU_003433_4_0_6"/>
<dbReference type="UniPathway" id="UPA00253">
    <property type="reaction ID" value="UER00329"/>
</dbReference>
<dbReference type="UniPathway" id="UPA00334">
    <property type="reaction ID" value="UER00455"/>
</dbReference>
<dbReference type="Proteomes" id="UP000000576">
    <property type="component" value="Chromosome"/>
</dbReference>
<dbReference type="GO" id="GO:0005737">
    <property type="term" value="C:cytoplasm"/>
    <property type="evidence" value="ECO:0007669"/>
    <property type="project" value="InterPro"/>
</dbReference>
<dbReference type="GO" id="GO:0030429">
    <property type="term" value="F:kynureninase activity"/>
    <property type="evidence" value="ECO:0007669"/>
    <property type="project" value="UniProtKB-UniRule"/>
</dbReference>
<dbReference type="GO" id="GO:0030170">
    <property type="term" value="F:pyridoxal phosphate binding"/>
    <property type="evidence" value="ECO:0007669"/>
    <property type="project" value="UniProtKB-UniRule"/>
</dbReference>
<dbReference type="GO" id="GO:0043420">
    <property type="term" value="P:anthranilate metabolic process"/>
    <property type="evidence" value="ECO:0007669"/>
    <property type="project" value="TreeGrafter"/>
</dbReference>
<dbReference type="GO" id="GO:0097053">
    <property type="term" value="P:L-kynurenine catabolic process"/>
    <property type="evidence" value="ECO:0007669"/>
    <property type="project" value="UniProtKB-UniRule"/>
</dbReference>
<dbReference type="GO" id="GO:0019441">
    <property type="term" value="P:L-tryptophan catabolic process to kynurenine"/>
    <property type="evidence" value="ECO:0007669"/>
    <property type="project" value="TreeGrafter"/>
</dbReference>
<dbReference type="GO" id="GO:0009435">
    <property type="term" value="P:NAD biosynthetic process"/>
    <property type="evidence" value="ECO:0007669"/>
    <property type="project" value="UniProtKB-UniPathway"/>
</dbReference>
<dbReference type="GO" id="GO:0019805">
    <property type="term" value="P:quinolinate biosynthetic process"/>
    <property type="evidence" value="ECO:0007669"/>
    <property type="project" value="UniProtKB-UniRule"/>
</dbReference>
<dbReference type="FunFam" id="3.40.640.10:FF:000031">
    <property type="entry name" value="Kynureninase"/>
    <property type="match status" value="1"/>
</dbReference>
<dbReference type="Gene3D" id="3.90.1150.10">
    <property type="entry name" value="Aspartate Aminotransferase, domain 1"/>
    <property type="match status" value="1"/>
</dbReference>
<dbReference type="Gene3D" id="3.40.640.10">
    <property type="entry name" value="Type I PLP-dependent aspartate aminotransferase-like (Major domain)"/>
    <property type="match status" value="1"/>
</dbReference>
<dbReference type="HAMAP" id="MF_01970">
    <property type="entry name" value="Kynureninase"/>
    <property type="match status" value="1"/>
</dbReference>
<dbReference type="InterPro" id="IPR010111">
    <property type="entry name" value="Kynureninase"/>
</dbReference>
<dbReference type="InterPro" id="IPR015424">
    <property type="entry name" value="PyrdxlP-dep_Trfase"/>
</dbReference>
<dbReference type="InterPro" id="IPR015421">
    <property type="entry name" value="PyrdxlP-dep_Trfase_major"/>
</dbReference>
<dbReference type="InterPro" id="IPR015422">
    <property type="entry name" value="PyrdxlP-dep_Trfase_small"/>
</dbReference>
<dbReference type="NCBIfam" id="TIGR01814">
    <property type="entry name" value="kynureninase"/>
    <property type="match status" value="1"/>
</dbReference>
<dbReference type="PANTHER" id="PTHR14084">
    <property type="entry name" value="KYNURENINASE"/>
    <property type="match status" value="1"/>
</dbReference>
<dbReference type="PANTHER" id="PTHR14084:SF0">
    <property type="entry name" value="KYNURENINASE"/>
    <property type="match status" value="1"/>
</dbReference>
<dbReference type="Pfam" id="PF22580">
    <property type="entry name" value="KYNU_C"/>
    <property type="match status" value="1"/>
</dbReference>
<dbReference type="PIRSF" id="PIRSF038800">
    <property type="entry name" value="KYNU"/>
    <property type="match status" value="1"/>
</dbReference>
<dbReference type="SUPFAM" id="SSF53383">
    <property type="entry name" value="PLP-dependent transferases"/>
    <property type="match status" value="1"/>
</dbReference>
<sequence>MTDPLSRAHAAALDAADPLRNLRDAFVFPQHGDDDQTYFVGNSLGLQPRAARAMVDEVLDQWGALAVEGHFTGPTQWLTYHQLVGDALARVVGAQPGEVVAMNTLSVNLHLMMASFYRPTAERGAILIEAGAFPSDRHAVESQLRLHGLDPATHLIEVEADEPNGTVSMSAIAEAIAQHGPHLALVLWPGIQYRTGQAFDLAEIVRLARAQGAAVGLDLAHAVGNLPLTLHDDGVDFAVWCHYKYLNAGPGAVGGCFVHARHATSDLPRMAGWWGHEQQTRFRMDPQFVPSPGAEGWQLSNPPVLALAPLRASLALFDQAGMAALRAKSEQLTGHLEQMIHARVPQVLQIVTPVEPARRGCQLSLRVAGGRARGRALFEHLHAAGVLGDWREPDVIRIAPVPLYNRFSDLHTFVEQVEAWAAA</sequence>
<accession>Q8PM33</accession>
<name>KYNU_XANAC</name>
<protein>
    <recommendedName>
        <fullName evidence="1">Kynureninase</fullName>
        <ecNumber evidence="1">3.7.1.3</ecNumber>
    </recommendedName>
    <alternativeName>
        <fullName evidence="1">L-kynurenine hydrolase</fullName>
    </alternativeName>
</protein>
<proteinExistence type="inferred from homology"/>
<keyword id="KW-0378">Hydrolase</keyword>
<keyword id="KW-0662">Pyridine nucleotide biosynthesis</keyword>
<keyword id="KW-0663">Pyridoxal phosphate</keyword>
<evidence type="ECO:0000255" key="1">
    <source>
        <dbReference type="HAMAP-Rule" id="MF_01970"/>
    </source>
</evidence>
<reference key="1">
    <citation type="journal article" date="2002" name="Nature">
        <title>Comparison of the genomes of two Xanthomonas pathogens with differing host specificities.</title>
        <authorList>
            <person name="da Silva A.C.R."/>
            <person name="Ferro J.A."/>
            <person name="Reinach F.C."/>
            <person name="Farah C.S."/>
            <person name="Furlan L.R."/>
            <person name="Quaggio R.B."/>
            <person name="Monteiro-Vitorello C.B."/>
            <person name="Van Sluys M.A."/>
            <person name="Almeida N.F. Jr."/>
            <person name="Alves L.M.C."/>
            <person name="do Amaral A.M."/>
            <person name="Bertolini M.C."/>
            <person name="Camargo L.E.A."/>
            <person name="Camarotte G."/>
            <person name="Cannavan F."/>
            <person name="Cardozo J."/>
            <person name="Chambergo F."/>
            <person name="Ciapina L.P."/>
            <person name="Cicarelli R.M.B."/>
            <person name="Coutinho L.L."/>
            <person name="Cursino-Santos J.R."/>
            <person name="El-Dorry H."/>
            <person name="Faria J.B."/>
            <person name="Ferreira A.J.S."/>
            <person name="Ferreira R.C.C."/>
            <person name="Ferro M.I.T."/>
            <person name="Formighieri E.F."/>
            <person name="Franco M.C."/>
            <person name="Greggio C.C."/>
            <person name="Gruber A."/>
            <person name="Katsuyama A.M."/>
            <person name="Kishi L.T."/>
            <person name="Leite R.P."/>
            <person name="Lemos E.G.M."/>
            <person name="Lemos M.V.F."/>
            <person name="Locali E.C."/>
            <person name="Machado M.A."/>
            <person name="Madeira A.M.B.N."/>
            <person name="Martinez-Rossi N.M."/>
            <person name="Martins E.C."/>
            <person name="Meidanis J."/>
            <person name="Menck C.F.M."/>
            <person name="Miyaki C.Y."/>
            <person name="Moon D.H."/>
            <person name="Moreira L.M."/>
            <person name="Novo M.T.M."/>
            <person name="Okura V.K."/>
            <person name="Oliveira M.C."/>
            <person name="Oliveira V.R."/>
            <person name="Pereira H.A."/>
            <person name="Rossi A."/>
            <person name="Sena J.A.D."/>
            <person name="Silva C."/>
            <person name="de Souza R.F."/>
            <person name="Spinola L.A.F."/>
            <person name="Takita M.A."/>
            <person name="Tamura R.E."/>
            <person name="Teixeira E.C."/>
            <person name="Tezza R.I.D."/>
            <person name="Trindade dos Santos M."/>
            <person name="Truffi D."/>
            <person name="Tsai S.M."/>
            <person name="White F.F."/>
            <person name="Setubal J.C."/>
            <person name="Kitajima J.P."/>
        </authorList>
    </citation>
    <scope>NUCLEOTIDE SEQUENCE [LARGE SCALE GENOMIC DNA]</scope>
    <source>
        <strain>306</strain>
    </source>
</reference>
<organism>
    <name type="scientific">Xanthomonas axonopodis pv. citri (strain 306)</name>
    <dbReference type="NCBI Taxonomy" id="190486"/>
    <lineage>
        <taxon>Bacteria</taxon>
        <taxon>Pseudomonadati</taxon>
        <taxon>Pseudomonadota</taxon>
        <taxon>Gammaproteobacteria</taxon>
        <taxon>Lysobacterales</taxon>
        <taxon>Lysobacteraceae</taxon>
        <taxon>Xanthomonas</taxon>
    </lineage>
</organism>
<comment type="function">
    <text evidence="1">Catalyzes the cleavage of L-kynurenine (L-Kyn) and L-3-hydroxykynurenine (L-3OHKyn) into anthranilic acid (AA) and 3-hydroxyanthranilic acid (3-OHAA), respectively.</text>
</comment>
<comment type="catalytic activity">
    <reaction evidence="1">
        <text>L-kynurenine + H2O = anthranilate + L-alanine + H(+)</text>
        <dbReference type="Rhea" id="RHEA:16813"/>
        <dbReference type="ChEBI" id="CHEBI:15377"/>
        <dbReference type="ChEBI" id="CHEBI:15378"/>
        <dbReference type="ChEBI" id="CHEBI:16567"/>
        <dbReference type="ChEBI" id="CHEBI:57959"/>
        <dbReference type="ChEBI" id="CHEBI:57972"/>
        <dbReference type="EC" id="3.7.1.3"/>
    </reaction>
</comment>
<comment type="catalytic activity">
    <reaction evidence="1">
        <text>3-hydroxy-L-kynurenine + H2O = 3-hydroxyanthranilate + L-alanine + H(+)</text>
        <dbReference type="Rhea" id="RHEA:25143"/>
        <dbReference type="ChEBI" id="CHEBI:15377"/>
        <dbReference type="ChEBI" id="CHEBI:15378"/>
        <dbReference type="ChEBI" id="CHEBI:36559"/>
        <dbReference type="ChEBI" id="CHEBI:57972"/>
        <dbReference type="ChEBI" id="CHEBI:58125"/>
        <dbReference type="EC" id="3.7.1.3"/>
    </reaction>
</comment>
<comment type="cofactor">
    <cofactor evidence="1">
        <name>pyridoxal 5'-phosphate</name>
        <dbReference type="ChEBI" id="CHEBI:597326"/>
    </cofactor>
</comment>
<comment type="pathway">
    <text evidence="1">Amino-acid degradation; L-kynurenine degradation; L-alanine and anthranilate from L-kynurenine: step 1/1.</text>
</comment>
<comment type="pathway">
    <text evidence="1">Cofactor biosynthesis; NAD(+) biosynthesis; quinolinate from L-kynurenine: step 2/3.</text>
</comment>
<comment type="subunit">
    <text evidence="1">Homodimer.</text>
</comment>
<comment type="similarity">
    <text evidence="1">Belongs to the kynureninase family.</text>
</comment>
<gene>
    <name evidence="1" type="primary">kynU</name>
    <name type="ordered locus">XAC1601</name>
</gene>